<keyword id="KW-0119">Carbohydrate metabolism</keyword>
<keyword id="KW-0961">Cell wall biogenesis/degradation</keyword>
<keyword id="KW-0903">Direct protein sequencing</keyword>
<keyword id="KW-0299">Galactose metabolism</keyword>
<keyword id="KW-0413">Isomerase</keyword>
<keyword id="KW-0520">NAD</keyword>
<sequence length="350" mass="38960">MVASSQKILVTGGAGFIGTHTVVQLLNNGFNVSIIDNFDNSVMEAVERVREVVGSNLSQNLEFTLGDLRNKDDLEKLFSKSKFDAVIHFAGLKAVGESVENPRRYFDNNLVGTINLYEVMAKHNCKKMVFSSSATVYGQPEKIPCVEDFKLQAMNPYGRTKLFLEEIARDIQKAEPEWRIVLLRYFNPVGAHESGKLGEDPRGIPNNLMPYIQQVAVGRLPELNVYGHDYPTRDGSAIRDYIHVMDLADGHIAALRKLFTSENIGCTAYNLGTGRGSSVLEMVAAFEKASGKKIALKLCPRRPGDATEVYASTAKAEKELGWKAKYGVEEMCRDQWNWAKNNPWGYSGKP</sequence>
<gene>
    <name evidence="4" type="primary">UGE1</name>
</gene>
<reference key="1">
    <citation type="journal article" date="2009" name="Biochem. J.">
        <title>Bifunctional cytosolic UDP-glucose 4-epimerases catalyse the interconversion between UDP-D-xylose and UDP-L-arabinose in plants.</title>
        <authorList>
            <person name="Kotake T."/>
            <person name="Takata R."/>
            <person name="Verma R."/>
            <person name="Takaba M."/>
            <person name="Yamaguchi D."/>
            <person name="Orita T."/>
            <person name="Kaneko S."/>
            <person name="Matsuoka K."/>
            <person name="Koyama T."/>
            <person name="Reiter W.D."/>
            <person name="Tsumuraya Y."/>
        </authorList>
    </citation>
    <scope>NUCLEOTIDE SEQUENCE [MRNA]</scope>
    <scope>PROTEIN SEQUENCE OF 2-30</scope>
    <scope>FUNCTION</scope>
    <scope>CATALYTIC ACTIVITY</scope>
    <scope>BIOPHYSICOCHEMICAL PROPERTIES</scope>
    <scope>ACTIVITY REGULATION</scope>
</reference>
<name>UGE1_PEA</name>
<evidence type="ECO:0000250" key="1"/>
<evidence type="ECO:0000250" key="2">
    <source>
        <dbReference type="UniProtKB" id="Q14376"/>
    </source>
</evidence>
<evidence type="ECO:0000269" key="3">
    <source>
    </source>
</evidence>
<evidence type="ECO:0000303" key="4">
    <source>
    </source>
</evidence>
<evidence type="ECO:0000305" key="5"/>
<protein>
    <recommendedName>
        <fullName evidence="4">Bifunctional UDP-glucose 4-epimerase and UDP-xylose 4-epimerase 1</fullName>
        <ecNumber evidence="3">5.1.3.2</ecNumber>
        <ecNumber evidence="3">5.1.3.5</ecNumber>
    </recommendedName>
    <alternativeName>
        <fullName evidence="5">UDP-D-xylose 4-epimerase</fullName>
    </alternativeName>
    <alternativeName>
        <fullName evidence="5">UDP-L-arabinose 4-epimerase</fullName>
    </alternativeName>
    <alternativeName>
        <fullName evidence="4">UDP-galactose 4-epimerase 1</fullName>
    </alternativeName>
    <alternativeName>
        <fullName evidence="4">UDP-glucose 4-epimerase 1</fullName>
        <shortName evidence="4">PsUGE1</shortName>
    </alternativeName>
</protein>
<proteinExistence type="evidence at protein level"/>
<organism>
    <name type="scientific">Pisum sativum</name>
    <name type="common">Garden pea</name>
    <name type="synonym">Lathyrus oleraceus</name>
    <dbReference type="NCBI Taxonomy" id="3888"/>
    <lineage>
        <taxon>Eukaryota</taxon>
        <taxon>Viridiplantae</taxon>
        <taxon>Streptophyta</taxon>
        <taxon>Embryophyta</taxon>
        <taxon>Tracheophyta</taxon>
        <taxon>Spermatophyta</taxon>
        <taxon>Magnoliopsida</taxon>
        <taxon>eudicotyledons</taxon>
        <taxon>Gunneridae</taxon>
        <taxon>Pentapetalae</taxon>
        <taxon>rosids</taxon>
        <taxon>fabids</taxon>
        <taxon>Fabales</taxon>
        <taxon>Fabaceae</taxon>
        <taxon>Papilionoideae</taxon>
        <taxon>50 kb inversion clade</taxon>
        <taxon>NPAAA clade</taxon>
        <taxon>Hologalegina</taxon>
        <taxon>IRL clade</taxon>
        <taxon>Fabeae</taxon>
        <taxon>Pisum</taxon>
    </lineage>
</organism>
<feature type="initiator methionine" description="Removed" evidence="3">
    <location>
        <position position="1"/>
    </location>
</feature>
<feature type="chain" id="PRO_0000422187" description="Bifunctional UDP-glucose 4-epimerase and UDP-xylose 4-epimerase 1">
    <location>
        <begin position="2"/>
        <end position="350"/>
    </location>
</feature>
<feature type="active site" description="Proton acceptor" evidence="2">
    <location>
        <position position="157"/>
    </location>
</feature>
<feature type="binding site" evidence="2">
    <location>
        <begin position="15"/>
        <end position="17"/>
    </location>
    <ligand>
        <name>NAD(+)</name>
        <dbReference type="ChEBI" id="CHEBI:57540"/>
    </ligand>
</feature>
<feature type="binding site" evidence="2">
    <location>
        <begin position="36"/>
        <end position="40"/>
    </location>
    <ligand>
        <name>NAD(+)</name>
        <dbReference type="ChEBI" id="CHEBI:57540"/>
    </ligand>
</feature>
<feature type="binding site" evidence="2">
    <location>
        <begin position="67"/>
        <end position="68"/>
    </location>
    <ligand>
        <name>NAD(+)</name>
        <dbReference type="ChEBI" id="CHEBI:57540"/>
    </ligand>
</feature>
<feature type="binding site" evidence="2">
    <location>
        <position position="89"/>
    </location>
    <ligand>
        <name>NAD(+)</name>
        <dbReference type="ChEBI" id="CHEBI:57540"/>
    </ligand>
</feature>
<feature type="binding site" evidence="2">
    <location>
        <position position="93"/>
    </location>
    <ligand>
        <name>NAD(+)</name>
        <dbReference type="ChEBI" id="CHEBI:57540"/>
    </ligand>
</feature>
<feature type="binding site" evidence="1">
    <location>
        <position position="133"/>
    </location>
    <ligand>
        <name>substrate</name>
    </ligand>
</feature>
<feature type="binding site" evidence="2">
    <location>
        <position position="161"/>
    </location>
    <ligand>
        <name>NAD(+)</name>
        <dbReference type="ChEBI" id="CHEBI:57540"/>
    </ligand>
</feature>
<feature type="binding site" evidence="2">
    <location>
        <position position="185"/>
    </location>
    <ligand>
        <name>NAD(+)</name>
        <dbReference type="ChEBI" id="CHEBI:57540"/>
    </ligand>
</feature>
<comment type="function">
    <text evidence="3">Catalyzes the interconversion between UDP-glucose and UDP-galactose and the interconversion between UDP-arabinose and UDP-xylose.</text>
</comment>
<comment type="catalytic activity">
    <reaction evidence="3">
        <text>UDP-alpha-D-glucose = UDP-alpha-D-galactose</text>
        <dbReference type="Rhea" id="RHEA:22168"/>
        <dbReference type="ChEBI" id="CHEBI:58885"/>
        <dbReference type="ChEBI" id="CHEBI:66914"/>
        <dbReference type="EC" id="5.1.3.2"/>
    </reaction>
</comment>
<comment type="catalytic activity">
    <reaction evidence="3">
        <text>UDP-beta-L-arabinopyranose = UDP-alpha-D-xylose</text>
        <dbReference type="Rhea" id="RHEA:11320"/>
        <dbReference type="ChEBI" id="CHEBI:57632"/>
        <dbReference type="ChEBI" id="CHEBI:61457"/>
        <dbReference type="EC" id="5.1.3.5"/>
    </reaction>
</comment>
<comment type="cofactor">
    <cofactor evidence="2">
        <name>NAD(+)</name>
        <dbReference type="ChEBI" id="CHEBI:57540"/>
    </cofactor>
</comment>
<comment type="activity regulation">
    <text evidence="3">Inhibited by Hg(2+).</text>
</comment>
<comment type="biophysicochemical properties">
    <kinetics>
        <KM evidence="3">0.29 mM for UDP-galactose</KM>
        <KM evidence="3">0.31 mM for UDP-glucose</KM>
        <KM evidence="3">0.15 mM for UDP-xylose</KM>
        <KM evidence="3">0.16 mM for UDP-arabinose</KM>
    </kinetics>
    <phDependence>
        <text evidence="3">Optimum pH is 8.5-9.0.</text>
    </phDependence>
    <temperatureDependence>
        <text evidence="3">Optimum temperature is 30 degrees Celsius.</text>
    </temperatureDependence>
</comment>
<comment type="pathway">
    <text evidence="5">Carbohydrate metabolism; galactose metabolism.</text>
</comment>
<comment type="pathway">
    <text evidence="5">Nucleotide-sugar biosynthesis; UDP-L-arabinose biosynthesis; UDP-L-arabinose from UDP-alpha-D-xylose: step 1/1.</text>
</comment>
<comment type="pathway">
    <text evidence="5">Cell wall biogenesis; cell wall polysaccharide biosynthesis.</text>
</comment>
<comment type="similarity">
    <text evidence="5">Belongs to the NAD(P)-dependent epimerase/dehydratase family.</text>
</comment>
<accession>B0M3E8</accession>
<dbReference type="EC" id="5.1.3.2" evidence="3"/>
<dbReference type="EC" id="5.1.3.5" evidence="3"/>
<dbReference type="EMBL" id="AB381885">
    <property type="protein sequence ID" value="BAG09236.2"/>
    <property type="molecule type" value="mRNA"/>
</dbReference>
<dbReference type="SMR" id="B0M3E8"/>
<dbReference type="EnsemblPlants" id="Psat7g036120.1">
    <property type="protein sequence ID" value="Psat7g036120.1.cds"/>
    <property type="gene ID" value="Psat7g036120"/>
</dbReference>
<dbReference type="Gramene" id="Psat7g036120.1">
    <property type="protein sequence ID" value="Psat7g036120.1.cds"/>
    <property type="gene ID" value="Psat7g036120"/>
</dbReference>
<dbReference type="OrthoDB" id="9402762at2759"/>
<dbReference type="BRENDA" id="5.1.3.2">
    <property type="organism ID" value="4872"/>
</dbReference>
<dbReference type="BRENDA" id="5.1.3.5">
    <property type="organism ID" value="4872"/>
</dbReference>
<dbReference type="UniPathway" id="UPA00214"/>
<dbReference type="UniPathway" id="UPA00797">
    <property type="reaction ID" value="UER00772"/>
</dbReference>
<dbReference type="UniPathway" id="UPA00963"/>
<dbReference type="GO" id="GO:0005829">
    <property type="term" value="C:cytosol"/>
    <property type="evidence" value="ECO:0007669"/>
    <property type="project" value="TreeGrafter"/>
</dbReference>
<dbReference type="GO" id="GO:0050373">
    <property type="term" value="F:UDP-arabinose 4-epimerase activity"/>
    <property type="evidence" value="ECO:0000314"/>
    <property type="project" value="UniProtKB"/>
</dbReference>
<dbReference type="GO" id="GO:0003978">
    <property type="term" value="F:UDP-glucose 4-epimerase activity"/>
    <property type="evidence" value="ECO:0007669"/>
    <property type="project" value="UniProtKB-EC"/>
</dbReference>
<dbReference type="GO" id="GO:0045227">
    <property type="term" value="P:capsule polysaccharide biosynthetic process"/>
    <property type="evidence" value="ECO:0007669"/>
    <property type="project" value="UniProtKB-UniPathway"/>
</dbReference>
<dbReference type="GO" id="GO:0071555">
    <property type="term" value="P:cell wall organization"/>
    <property type="evidence" value="ECO:0007669"/>
    <property type="project" value="UniProtKB-KW"/>
</dbReference>
<dbReference type="GO" id="GO:0006012">
    <property type="term" value="P:galactose metabolic process"/>
    <property type="evidence" value="ECO:0007669"/>
    <property type="project" value="UniProtKB-UniPathway"/>
</dbReference>
<dbReference type="GO" id="GO:0033358">
    <property type="term" value="P:UDP-L-arabinose biosynthetic process"/>
    <property type="evidence" value="ECO:0007669"/>
    <property type="project" value="UniProtKB-UniPathway"/>
</dbReference>
<dbReference type="CDD" id="cd05247">
    <property type="entry name" value="UDP_G4E_1_SDR_e"/>
    <property type="match status" value="1"/>
</dbReference>
<dbReference type="FunFam" id="3.40.50.720:FF:000040">
    <property type="entry name" value="UDP-glucose 4-epimerase"/>
    <property type="match status" value="1"/>
</dbReference>
<dbReference type="FunFam" id="3.90.25.10:FF:000060">
    <property type="entry name" value="UDP-glucose 4-epimerase 4"/>
    <property type="match status" value="1"/>
</dbReference>
<dbReference type="Gene3D" id="3.40.50.720">
    <property type="entry name" value="NAD(P)-binding Rossmann-like Domain"/>
    <property type="match status" value="1"/>
</dbReference>
<dbReference type="Gene3D" id="3.90.25.10">
    <property type="entry name" value="UDP-galactose 4-epimerase, domain 1"/>
    <property type="match status" value="1"/>
</dbReference>
<dbReference type="InterPro" id="IPR016040">
    <property type="entry name" value="NAD(P)-bd_dom"/>
</dbReference>
<dbReference type="InterPro" id="IPR036291">
    <property type="entry name" value="NAD(P)-bd_dom_sf"/>
</dbReference>
<dbReference type="InterPro" id="IPR005886">
    <property type="entry name" value="UDP_G4E"/>
</dbReference>
<dbReference type="NCBIfam" id="TIGR01179">
    <property type="entry name" value="galE"/>
    <property type="match status" value="1"/>
</dbReference>
<dbReference type="NCBIfam" id="NF007956">
    <property type="entry name" value="PRK10675.1"/>
    <property type="match status" value="1"/>
</dbReference>
<dbReference type="PANTHER" id="PTHR43725:SF15">
    <property type="entry name" value="BIFUNCTIONAL UDP-GLUCOSE 4-EPIMERASE AND UDP-XYLOSE 4-EPIMERASE 1"/>
    <property type="match status" value="1"/>
</dbReference>
<dbReference type="PANTHER" id="PTHR43725">
    <property type="entry name" value="UDP-GLUCOSE 4-EPIMERASE"/>
    <property type="match status" value="1"/>
</dbReference>
<dbReference type="Pfam" id="PF16363">
    <property type="entry name" value="GDP_Man_Dehyd"/>
    <property type="match status" value="1"/>
</dbReference>
<dbReference type="SUPFAM" id="SSF51735">
    <property type="entry name" value="NAD(P)-binding Rossmann-fold domains"/>
    <property type="match status" value="1"/>
</dbReference>